<evidence type="ECO:0000255" key="1">
    <source>
        <dbReference type="HAMAP-Rule" id="MF_01848"/>
    </source>
</evidence>
<evidence type="ECO:0000256" key="2">
    <source>
        <dbReference type="SAM" id="MobiDB-lite"/>
    </source>
</evidence>
<accession>Q4FVS6</accession>
<dbReference type="EC" id="2.1.1.181" evidence="1"/>
<dbReference type="EMBL" id="CP000082">
    <property type="protein sequence ID" value="AAZ17882.1"/>
    <property type="molecule type" value="Genomic_DNA"/>
</dbReference>
<dbReference type="RefSeq" id="WP_011279321.1">
    <property type="nucleotide sequence ID" value="NC_007204.1"/>
</dbReference>
<dbReference type="SMR" id="Q4FVS6"/>
<dbReference type="STRING" id="259536.Psyc_0008"/>
<dbReference type="KEGG" id="par:Psyc_0008"/>
<dbReference type="eggNOG" id="COG3129">
    <property type="taxonomic scope" value="Bacteria"/>
</dbReference>
<dbReference type="HOGENOM" id="CLU_027534_3_0_6"/>
<dbReference type="OrthoDB" id="1115728at2"/>
<dbReference type="Proteomes" id="UP000000546">
    <property type="component" value="Chromosome"/>
</dbReference>
<dbReference type="GO" id="GO:0005737">
    <property type="term" value="C:cytoplasm"/>
    <property type="evidence" value="ECO:0007669"/>
    <property type="project" value="UniProtKB-SubCell"/>
</dbReference>
<dbReference type="GO" id="GO:0052907">
    <property type="term" value="F:23S rRNA (adenine(1618)-N(6))-methyltransferase activity"/>
    <property type="evidence" value="ECO:0007669"/>
    <property type="project" value="UniProtKB-EC"/>
</dbReference>
<dbReference type="GO" id="GO:0003676">
    <property type="term" value="F:nucleic acid binding"/>
    <property type="evidence" value="ECO:0007669"/>
    <property type="project" value="InterPro"/>
</dbReference>
<dbReference type="GO" id="GO:0070475">
    <property type="term" value="P:rRNA base methylation"/>
    <property type="evidence" value="ECO:0007669"/>
    <property type="project" value="TreeGrafter"/>
</dbReference>
<dbReference type="CDD" id="cd02440">
    <property type="entry name" value="AdoMet_MTases"/>
    <property type="match status" value="1"/>
</dbReference>
<dbReference type="Gene3D" id="3.40.50.150">
    <property type="entry name" value="Vaccinia Virus protein VP39"/>
    <property type="match status" value="1"/>
</dbReference>
<dbReference type="HAMAP" id="MF_01848">
    <property type="entry name" value="23SrRNA_methyltr_F"/>
    <property type="match status" value="1"/>
</dbReference>
<dbReference type="InterPro" id="IPR002052">
    <property type="entry name" value="DNA_methylase_N6_adenine_CS"/>
</dbReference>
<dbReference type="InterPro" id="IPR010286">
    <property type="entry name" value="METTL16/RlmF"/>
</dbReference>
<dbReference type="InterPro" id="IPR016909">
    <property type="entry name" value="rRNA_lsu_MeTfrase_F"/>
</dbReference>
<dbReference type="InterPro" id="IPR029063">
    <property type="entry name" value="SAM-dependent_MTases_sf"/>
</dbReference>
<dbReference type="NCBIfam" id="NF008725">
    <property type="entry name" value="PRK11727.1"/>
    <property type="match status" value="1"/>
</dbReference>
<dbReference type="PANTHER" id="PTHR13393:SF0">
    <property type="entry name" value="RNA N6-ADENOSINE-METHYLTRANSFERASE METTL16"/>
    <property type="match status" value="1"/>
</dbReference>
<dbReference type="PANTHER" id="PTHR13393">
    <property type="entry name" value="SAM-DEPENDENT METHYLTRANSFERASE"/>
    <property type="match status" value="1"/>
</dbReference>
<dbReference type="Pfam" id="PF05971">
    <property type="entry name" value="Methyltransf_10"/>
    <property type="match status" value="1"/>
</dbReference>
<dbReference type="PIRSF" id="PIRSF029038">
    <property type="entry name" value="Mtase_YbiN_prd"/>
    <property type="match status" value="1"/>
</dbReference>
<dbReference type="SUPFAM" id="SSF53335">
    <property type="entry name" value="S-adenosyl-L-methionine-dependent methyltransferases"/>
    <property type="match status" value="1"/>
</dbReference>
<organism>
    <name type="scientific">Psychrobacter arcticus (strain DSM 17307 / VKM B-2377 / 273-4)</name>
    <dbReference type="NCBI Taxonomy" id="259536"/>
    <lineage>
        <taxon>Bacteria</taxon>
        <taxon>Pseudomonadati</taxon>
        <taxon>Pseudomonadota</taxon>
        <taxon>Gammaproteobacteria</taxon>
        <taxon>Moraxellales</taxon>
        <taxon>Moraxellaceae</taxon>
        <taxon>Psychrobacter</taxon>
    </lineage>
</organism>
<sequence>MTSKPMTRRPTANNHRNRSPETAKKLGQLHPRNPHQGRYDFVALTHALPELAKHTITNPKGEPTINFSDSAAVRVLNQALLAHYYGVKFWDIPEGYLCPPIPGRADYIHYIADLLAQTTHVNKDNTPPTGKEIHALDIGTGASAIYPIVGSQSYGWRFTASDIDPISVNTAALICETNPKLKSAVKVKLQPEPKRIFANIIGRQDYFDVVVCNPPFHASLEEAMEANSRKQHNLQRHRGKNENEQISRSSTKSGNAAQNLNFGGQHKELWSEGGEIAFLTKMAKESQDFAEHVGWFTTLVSKSENVKPMQLLLKQLGVAQMRIIEMSQGQKSTRILAWRFNTDEE</sequence>
<name>RLMF_PSYA2</name>
<feature type="chain" id="PRO_0000349940" description="Ribosomal RNA large subunit methyltransferase F">
    <location>
        <begin position="1"/>
        <end position="345"/>
    </location>
</feature>
<feature type="region of interest" description="Disordered" evidence="2">
    <location>
        <begin position="1"/>
        <end position="35"/>
    </location>
</feature>
<feature type="region of interest" description="Disordered" evidence="2">
    <location>
        <begin position="225"/>
        <end position="258"/>
    </location>
</feature>
<feature type="compositionally biased region" description="Polar residues" evidence="2">
    <location>
        <begin position="1"/>
        <end position="14"/>
    </location>
</feature>
<feature type="compositionally biased region" description="Basic residues" evidence="2">
    <location>
        <begin position="229"/>
        <end position="239"/>
    </location>
</feature>
<feature type="compositionally biased region" description="Polar residues" evidence="2">
    <location>
        <begin position="246"/>
        <end position="258"/>
    </location>
</feature>
<gene>
    <name evidence="1" type="primary">rlmF</name>
    <name type="ordered locus">Psyc_0008</name>
</gene>
<keyword id="KW-0963">Cytoplasm</keyword>
<keyword id="KW-0489">Methyltransferase</keyword>
<keyword id="KW-1185">Reference proteome</keyword>
<keyword id="KW-0698">rRNA processing</keyword>
<keyword id="KW-0949">S-adenosyl-L-methionine</keyword>
<keyword id="KW-0808">Transferase</keyword>
<protein>
    <recommendedName>
        <fullName evidence="1">Ribosomal RNA large subunit methyltransferase F</fullName>
        <ecNumber evidence="1">2.1.1.181</ecNumber>
    </recommendedName>
    <alternativeName>
        <fullName evidence="1">23S rRNA mA1618 methyltransferase</fullName>
    </alternativeName>
    <alternativeName>
        <fullName evidence="1">rRNA adenine N-6-methyltransferase</fullName>
    </alternativeName>
</protein>
<reference key="1">
    <citation type="journal article" date="2010" name="Appl. Environ. Microbiol.">
        <title>The genome sequence of Psychrobacter arcticus 273-4, a psychroactive Siberian permafrost bacterium, reveals mechanisms for adaptation to low-temperature growth.</title>
        <authorList>
            <person name="Ayala-del-Rio H.L."/>
            <person name="Chain P.S."/>
            <person name="Grzymski J.J."/>
            <person name="Ponder M.A."/>
            <person name="Ivanova N."/>
            <person name="Bergholz P.W."/>
            <person name="Di Bartolo G."/>
            <person name="Hauser L."/>
            <person name="Land M."/>
            <person name="Bakermans C."/>
            <person name="Rodrigues D."/>
            <person name="Klappenbach J."/>
            <person name="Zarka D."/>
            <person name="Larimer F."/>
            <person name="Richardson P."/>
            <person name="Murray A."/>
            <person name="Thomashow M."/>
            <person name="Tiedje J.M."/>
        </authorList>
    </citation>
    <scope>NUCLEOTIDE SEQUENCE [LARGE SCALE GENOMIC DNA]</scope>
    <source>
        <strain>DSM 17307 / VKM B-2377 / 273-4</strain>
    </source>
</reference>
<comment type="function">
    <text evidence="1">Specifically methylates the adenine in position 1618 of 23S rRNA.</text>
</comment>
<comment type="catalytic activity">
    <reaction evidence="1">
        <text>adenosine(1618) in 23S rRNA + S-adenosyl-L-methionine = N(6)-methyladenosine(1618) in 23S rRNA + S-adenosyl-L-homocysteine + H(+)</text>
        <dbReference type="Rhea" id="RHEA:16497"/>
        <dbReference type="Rhea" id="RHEA-COMP:10229"/>
        <dbReference type="Rhea" id="RHEA-COMP:10231"/>
        <dbReference type="ChEBI" id="CHEBI:15378"/>
        <dbReference type="ChEBI" id="CHEBI:57856"/>
        <dbReference type="ChEBI" id="CHEBI:59789"/>
        <dbReference type="ChEBI" id="CHEBI:74411"/>
        <dbReference type="ChEBI" id="CHEBI:74449"/>
        <dbReference type="EC" id="2.1.1.181"/>
    </reaction>
</comment>
<comment type="subcellular location">
    <subcellularLocation>
        <location evidence="1">Cytoplasm</location>
    </subcellularLocation>
</comment>
<comment type="similarity">
    <text evidence="1">Belongs to the methyltransferase superfamily. METTL16/RlmF family.</text>
</comment>
<proteinExistence type="inferred from homology"/>